<sequence>MSAIYNFCAGPAMLPQAVMQKAQQELVDWNGLGVSVMEISHRSKEFIALTDQAEVTLRKLMSIPANYHVLFMHGGGRAQFSNVVNNFLGDNGQALYLVSGQWSSAAVTEAKKLVSEHNIDSINIVEQINGLYQVKLPDLTAIDKDYRYVHYCSNETVDGIEIFEELDSPWPIVADLSSTIMSHEIDVSKYGLIYAGAQKNIGPSGLSIVIVRDDMLKLPSLPQSSVMDYRVAVEHGSMFNTPPTFAWYLASEVFAWLAAKGGVSAMAEVNQQKAALLYDCIDSNPFYKNGVAPHNRSRMNVTFQLVNDALDSEFLAQAEQAGLVALKGHRIVGGMRASIYNAMPLAGVQALVDFMNNFAVKHS</sequence>
<protein>
    <recommendedName>
        <fullName evidence="1">Phosphoserine aminotransferase</fullName>
        <ecNumber evidence="1">2.6.1.52</ecNumber>
    </recommendedName>
    <alternativeName>
        <fullName evidence="1">Phosphohydroxythreonine aminotransferase</fullName>
        <shortName evidence="1">PSAT</shortName>
    </alternativeName>
</protein>
<gene>
    <name evidence="1" type="primary">serC</name>
    <name type="ordered locus">Sfri_2129</name>
</gene>
<organism>
    <name type="scientific">Shewanella frigidimarina (strain NCIMB 400)</name>
    <dbReference type="NCBI Taxonomy" id="318167"/>
    <lineage>
        <taxon>Bacteria</taxon>
        <taxon>Pseudomonadati</taxon>
        <taxon>Pseudomonadota</taxon>
        <taxon>Gammaproteobacteria</taxon>
        <taxon>Alteromonadales</taxon>
        <taxon>Shewanellaceae</taxon>
        <taxon>Shewanella</taxon>
    </lineage>
</organism>
<dbReference type="EC" id="2.6.1.52" evidence="1"/>
<dbReference type="EMBL" id="CP000447">
    <property type="protein sequence ID" value="ABI71975.1"/>
    <property type="molecule type" value="Genomic_DNA"/>
</dbReference>
<dbReference type="RefSeq" id="WP_011637585.1">
    <property type="nucleotide sequence ID" value="NC_008345.1"/>
</dbReference>
<dbReference type="SMR" id="Q081U0"/>
<dbReference type="STRING" id="318167.Sfri_2129"/>
<dbReference type="KEGG" id="sfr:Sfri_2129"/>
<dbReference type="eggNOG" id="COG1932">
    <property type="taxonomic scope" value="Bacteria"/>
</dbReference>
<dbReference type="HOGENOM" id="CLU_034866_0_2_6"/>
<dbReference type="OrthoDB" id="9809412at2"/>
<dbReference type="UniPathway" id="UPA00135">
    <property type="reaction ID" value="UER00197"/>
</dbReference>
<dbReference type="UniPathway" id="UPA00244">
    <property type="reaction ID" value="UER00311"/>
</dbReference>
<dbReference type="Proteomes" id="UP000000684">
    <property type="component" value="Chromosome"/>
</dbReference>
<dbReference type="GO" id="GO:0005737">
    <property type="term" value="C:cytoplasm"/>
    <property type="evidence" value="ECO:0007669"/>
    <property type="project" value="UniProtKB-SubCell"/>
</dbReference>
<dbReference type="GO" id="GO:0004648">
    <property type="term" value="F:O-phospho-L-serine:2-oxoglutarate aminotransferase activity"/>
    <property type="evidence" value="ECO:0007669"/>
    <property type="project" value="UniProtKB-UniRule"/>
</dbReference>
<dbReference type="GO" id="GO:0030170">
    <property type="term" value="F:pyridoxal phosphate binding"/>
    <property type="evidence" value="ECO:0007669"/>
    <property type="project" value="UniProtKB-UniRule"/>
</dbReference>
<dbReference type="GO" id="GO:0006564">
    <property type="term" value="P:L-serine biosynthetic process"/>
    <property type="evidence" value="ECO:0007669"/>
    <property type="project" value="UniProtKB-UniRule"/>
</dbReference>
<dbReference type="GO" id="GO:0008615">
    <property type="term" value="P:pyridoxine biosynthetic process"/>
    <property type="evidence" value="ECO:0007669"/>
    <property type="project" value="UniProtKB-UniRule"/>
</dbReference>
<dbReference type="FunFam" id="3.40.640.10:FF:000010">
    <property type="entry name" value="Phosphoserine aminotransferase"/>
    <property type="match status" value="1"/>
</dbReference>
<dbReference type="FunFam" id="3.90.1150.10:FF:000006">
    <property type="entry name" value="Phosphoserine aminotransferase"/>
    <property type="match status" value="1"/>
</dbReference>
<dbReference type="Gene3D" id="3.90.1150.10">
    <property type="entry name" value="Aspartate Aminotransferase, domain 1"/>
    <property type="match status" value="1"/>
</dbReference>
<dbReference type="Gene3D" id="3.40.640.10">
    <property type="entry name" value="Type I PLP-dependent aspartate aminotransferase-like (Major domain)"/>
    <property type="match status" value="1"/>
</dbReference>
<dbReference type="HAMAP" id="MF_00160">
    <property type="entry name" value="SerC_aminotrans_5"/>
    <property type="match status" value="1"/>
</dbReference>
<dbReference type="InterPro" id="IPR000192">
    <property type="entry name" value="Aminotrans_V_dom"/>
</dbReference>
<dbReference type="InterPro" id="IPR020578">
    <property type="entry name" value="Aminotrans_V_PyrdxlP_BS"/>
</dbReference>
<dbReference type="InterPro" id="IPR022278">
    <property type="entry name" value="Pser_aminoTfrase"/>
</dbReference>
<dbReference type="InterPro" id="IPR015424">
    <property type="entry name" value="PyrdxlP-dep_Trfase"/>
</dbReference>
<dbReference type="InterPro" id="IPR015421">
    <property type="entry name" value="PyrdxlP-dep_Trfase_major"/>
</dbReference>
<dbReference type="InterPro" id="IPR015422">
    <property type="entry name" value="PyrdxlP-dep_Trfase_small"/>
</dbReference>
<dbReference type="NCBIfam" id="NF003764">
    <property type="entry name" value="PRK05355.1"/>
    <property type="match status" value="1"/>
</dbReference>
<dbReference type="NCBIfam" id="TIGR01364">
    <property type="entry name" value="serC_1"/>
    <property type="match status" value="1"/>
</dbReference>
<dbReference type="PANTHER" id="PTHR43247">
    <property type="entry name" value="PHOSPHOSERINE AMINOTRANSFERASE"/>
    <property type="match status" value="1"/>
</dbReference>
<dbReference type="PANTHER" id="PTHR43247:SF1">
    <property type="entry name" value="PHOSPHOSERINE AMINOTRANSFERASE"/>
    <property type="match status" value="1"/>
</dbReference>
<dbReference type="Pfam" id="PF00266">
    <property type="entry name" value="Aminotran_5"/>
    <property type="match status" value="1"/>
</dbReference>
<dbReference type="PIRSF" id="PIRSF000525">
    <property type="entry name" value="SerC"/>
    <property type="match status" value="1"/>
</dbReference>
<dbReference type="SUPFAM" id="SSF53383">
    <property type="entry name" value="PLP-dependent transferases"/>
    <property type="match status" value="1"/>
</dbReference>
<dbReference type="PROSITE" id="PS00595">
    <property type="entry name" value="AA_TRANSFER_CLASS_5"/>
    <property type="match status" value="1"/>
</dbReference>
<accession>Q081U0</accession>
<comment type="function">
    <text evidence="1">Catalyzes the reversible conversion of 3-phosphohydroxypyruvate to phosphoserine and of 3-hydroxy-2-oxo-4-phosphonooxybutanoate to phosphohydroxythreonine.</text>
</comment>
<comment type="catalytic activity">
    <reaction evidence="1">
        <text>O-phospho-L-serine + 2-oxoglutarate = 3-phosphooxypyruvate + L-glutamate</text>
        <dbReference type="Rhea" id="RHEA:14329"/>
        <dbReference type="ChEBI" id="CHEBI:16810"/>
        <dbReference type="ChEBI" id="CHEBI:18110"/>
        <dbReference type="ChEBI" id="CHEBI:29985"/>
        <dbReference type="ChEBI" id="CHEBI:57524"/>
        <dbReference type="EC" id="2.6.1.52"/>
    </reaction>
</comment>
<comment type="catalytic activity">
    <reaction evidence="1">
        <text>4-(phosphooxy)-L-threonine + 2-oxoglutarate = (R)-3-hydroxy-2-oxo-4-phosphooxybutanoate + L-glutamate</text>
        <dbReference type="Rhea" id="RHEA:16573"/>
        <dbReference type="ChEBI" id="CHEBI:16810"/>
        <dbReference type="ChEBI" id="CHEBI:29985"/>
        <dbReference type="ChEBI" id="CHEBI:58452"/>
        <dbReference type="ChEBI" id="CHEBI:58538"/>
        <dbReference type="EC" id="2.6.1.52"/>
    </reaction>
</comment>
<comment type="cofactor">
    <cofactor evidence="1">
        <name>pyridoxal 5'-phosphate</name>
        <dbReference type="ChEBI" id="CHEBI:597326"/>
    </cofactor>
    <text evidence="1">Binds 1 pyridoxal phosphate per subunit.</text>
</comment>
<comment type="pathway">
    <text evidence="1">Amino-acid biosynthesis; L-serine biosynthesis; L-serine from 3-phospho-D-glycerate: step 2/3.</text>
</comment>
<comment type="pathway">
    <text evidence="1">Cofactor biosynthesis; pyridoxine 5'-phosphate biosynthesis; pyridoxine 5'-phosphate from D-erythrose 4-phosphate: step 3/5.</text>
</comment>
<comment type="subunit">
    <text evidence="1">Homodimer.</text>
</comment>
<comment type="subcellular location">
    <subcellularLocation>
        <location evidence="1">Cytoplasm</location>
    </subcellularLocation>
</comment>
<comment type="similarity">
    <text evidence="1">Belongs to the class-V pyridoxal-phosphate-dependent aminotransferase family. SerC subfamily.</text>
</comment>
<proteinExistence type="inferred from homology"/>
<keyword id="KW-0028">Amino-acid biosynthesis</keyword>
<keyword id="KW-0032">Aminotransferase</keyword>
<keyword id="KW-0963">Cytoplasm</keyword>
<keyword id="KW-0663">Pyridoxal phosphate</keyword>
<keyword id="KW-0664">Pyridoxine biosynthesis</keyword>
<keyword id="KW-1185">Reference proteome</keyword>
<keyword id="KW-0718">Serine biosynthesis</keyword>
<keyword id="KW-0808">Transferase</keyword>
<feature type="chain" id="PRO_1000203567" description="Phosphoserine aminotransferase">
    <location>
        <begin position="1"/>
        <end position="363"/>
    </location>
</feature>
<feature type="binding site" evidence="1">
    <location>
        <position position="42"/>
    </location>
    <ligand>
        <name>L-glutamate</name>
        <dbReference type="ChEBI" id="CHEBI:29985"/>
    </ligand>
</feature>
<feature type="binding site" evidence="1">
    <location>
        <begin position="76"/>
        <end position="77"/>
    </location>
    <ligand>
        <name>pyridoxal 5'-phosphate</name>
        <dbReference type="ChEBI" id="CHEBI:597326"/>
    </ligand>
</feature>
<feature type="binding site" evidence="1">
    <location>
        <position position="102"/>
    </location>
    <ligand>
        <name>pyridoxal 5'-phosphate</name>
        <dbReference type="ChEBI" id="CHEBI:597326"/>
    </ligand>
</feature>
<feature type="binding site" evidence="1">
    <location>
        <position position="156"/>
    </location>
    <ligand>
        <name>pyridoxal 5'-phosphate</name>
        <dbReference type="ChEBI" id="CHEBI:597326"/>
    </ligand>
</feature>
<feature type="binding site" evidence="1">
    <location>
        <position position="175"/>
    </location>
    <ligand>
        <name>pyridoxal 5'-phosphate</name>
        <dbReference type="ChEBI" id="CHEBI:597326"/>
    </ligand>
</feature>
<feature type="binding site" evidence="1">
    <location>
        <position position="198"/>
    </location>
    <ligand>
        <name>pyridoxal 5'-phosphate</name>
        <dbReference type="ChEBI" id="CHEBI:597326"/>
    </ligand>
</feature>
<feature type="binding site" evidence="1">
    <location>
        <begin position="240"/>
        <end position="241"/>
    </location>
    <ligand>
        <name>pyridoxal 5'-phosphate</name>
        <dbReference type="ChEBI" id="CHEBI:597326"/>
    </ligand>
</feature>
<feature type="modified residue" description="N6-(pyridoxal phosphate)lysine" evidence="1">
    <location>
        <position position="199"/>
    </location>
</feature>
<reference key="1">
    <citation type="submission" date="2006-08" db="EMBL/GenBank/DDBJ databases">
        <title>Complete sequence of Shewanella frigidimarina NCIMB 400.</title>
        <authorList>
            <consortium name="US DOE Joint Genome Institute"/>
            <person name="Copeland A."/>
            <person name="Lucas S."/>
            <person name="Lapidus A."/>
            <person name="Barry K."/>
            <person name="Detter J.C."/>
            <person name="Glavina del Rio T."/>
            <person name="Hammon N."/>
            <person name="Israni S."/>
            <person name="Dalin E."/>
            <person name="Tice H."/>
            <person name="Pitluck S."/>
            <person name="Fredrickson J.K."/>
            <person name="Kolker E."/>
            <person name="McCuel L.A."/>
            <person name="DiChristina T."/>
            <person name="Nealson K.H."/>
            <person name="Newman D."/>
            <person name="Tiedje J.M."/>
            <person name="Zhou J."/>
            <person name="Romine M.F."/>
            <person name="Culley D.E."/>
            <person name="Serres M."/>
            <person name="Chertkov O."/>
            <person name="Brettin T."/>
            <person name="Bruce D."/>
            <person name="Han C."/>
            <person name="Tapia R."/>
            <person name="Gilna P."/>
            <person name="Schmutz J."/>
            <person name="Larimer F."/>
            <person name="Land M."/>
            <person name="Hauser L."/>
            <person name="Kyrpides N."/>
            <person name="Mikhailova N."/>
            <person name="Richardson P."/>
        </authorList>
    </citation>
    <scope>NUCLEOTIDE SEQUENCE [LARGE SCALE GENOMIC DNA]</scope>
    <source>
        <strain>NCIMB 400</strain>
    </source>
</reference>
<name>SERC_SHEFN</name>
<evidence type="ECO:0000255" key="1">
    <source>
        <dbReference type="HAMAP-Rule" id="MF_00160"/>
    </source>
</evidence>